<accession>O57428</accession>
<accession>Q6AZI0</accession>
<protein>
    <recommendedName>
        <fullName>Hyaluronan synthase-related protein</fullName>
    </recommendedName>
    <alternativeName>
        <fullName>Hyaluronan synthase-related sequence</fullName>
        <shortName>xHAS-rs</shortName>
    </alternativeName>
</protein>
<comment type="subcellular location">
    <subcellularLocation>
        <location evidence="3">Membrane</location>
        <topology evidence="3">Multi-pass membrane protein</topology>
    </subcellularLocation>
</comment>
<comment type="developmental stage">
    <text evidence="2">Expressed during a short window during embryogenesis between at least stages 12 and 19.</text>
</comment>
<comment type="similarity">
    <text evidence="3">Belongs to the NodC/HAS family.</text>
</comment>
<comment type="caution">
    <text evidence="3">Probably inactive because it lacks critical residues conserved in other family members, including an Asp in the motif DSDT, which is NSDI in has-rs, and an Arg residue in the motif QXXRW, which is QQTPW in has-rs. Also inactive in the functional assays of PubMed:9442026.</text>
</comment>
<gene>
    <name type="primary">has-rs</name>
    <name type="synonym">hasrs</name>
</gene>
<dbReference type="EMBL" id="AF015780">
    <property type="protein sequence ID" value="AAC60343.1"/>
    <property type="molecule type" value="mRNA"/>
</dbReference>
<dbReference type="EMBL" id="BC077983">
    <property type="protein sequence ID" value="AAH77983.1"/>
    <property type="molecule type" value="mRNA"/>
</dbReference>
<dbReference type="RefSeq" id="NP_001081828.1">
    <property type="nucleotide sequence ID" value="NM_001088359.1"/>
</dbReference>
<dbReference type="SMR" id="O57428"/>
<dbReference type="CAZy" id="GT2">
    <property type="family name" value="Glycosyltransferase Family 2"/>
</dbReference>
<dbReference type="DNASU" id="398074"/>
<dbReference type="GeneID" id="398074"/>
<dbReference type="KEGG" id="xla:398074"/>
<dbReference type="AGR" id="Xenbase:XB-GENE-6252031"/>
<dbReference type="CTD" id="398074"/>
<dbReference type="Xenbase" id="XB-GENE-6252031">
    <property type="gene designation" value="has-rs.S"/>
</dbReference>
<dbReference type="OrthoDB" id="9876900at2759"/>
<dbReference type="Proteomes" id="UP000186698">
    <property type="component" value="Chromosome 3S"/>
</dbReference>
<dbReference type="GO" id="GO:0005886">
    <property type="term" value="C:plasma membrane"/>
    <property type="evidence" value="ECO:0000318"/>
    <property type="project" value="GO_Central"/>
</dbReference>
<dbReference type="GO" id="GO:0050501">
    <property type="term" value="F:hyaluronan synthase activity"/>
    <property type="evidence" value="ECO:0000318"/>
    <property type="project" value="GO_Central"/>
</dbReference>
<dbReference type="GO" id="GO:0085029">
    <property type="term" value="P:extracellular matrix assembly"/>
    <property type="evidence" value="ECO:0000318"/>
    <property type="project" value="GO_Central"/>
</dbReference>
<dbReference type="GO" id="GO:0030213">
    <property type="term" value="P:hyaluronan biosynthetic process"/>
    <property type="evidence" value="ECO:0000318"/>
    <property type="project" value="GO_Central"/>
</dbReference>
<dbReference type="GO" id="GO:0000271">
    <property type="term" value="P:polysaccharide biosynthetic process"/>
    <property type="evidence" value="ECO:0000318"/>
    <property type="project" value="GO_Central"/>
</dbReference>
<dbReference type="CDD" id="cd06434">
    <property type="entry name" value="GT2_HAS"/>
    <property type="match status" value="1"/>
</dbReference>
<dbReference type="Gene3D" id="3.90.550.10">
    <property type="entry name" value="Spore Coat Polysaccharide Biosynthesis Protein SpsA, Chain A"/>
    <property type="match status" value="1"/>
</dbReference>
<dbReference type="InterPro" id="IPR029044">
    <property type="entry name" value="Nucleotide-diphossugar_trans"/>
</dbReference>
<dbReference type="PANTHER" id="PTHR22913">
    <property type="entry name" value="HYALURONAN SYNTHASE"/>
    <property type="match status" value="1"/>
</dbReference>
<dbReference type="PANTHER" id="PTHR22913:SF13">
    <property type="entry name" value="HYALURONAN SYNTHASE 1"/>
    <property type="match status" value="1"/>
</dbReference>
<dbReference type="Pfam" id="PF13641">
    <property type="entry name" value="Glyco_tranf_2_3"/>
    <property type="match status" value="1"/>
</dbReference>
<dbReference type="SUPFAM" id="SSF53448">
    <property type="entry name" value="Nucleotide-diphospho-sugar transferases"/>
    <property type="match status" value="1"/>
</dbReference>
<reference key="1">
    <citation type="journal article" date="1998" name="J. Biol. Chem.">
        <title>Characterization and molecular evolution of a vertebrate hyaluronan synthase gene family.</title>
        <authorList>
            <person name="Spicer A.P."/>
            <person name="McDonald J.A."/>
        </authorList>
    </citation>
    <scope>NUCLEOTIDE SEQUENCE [MRNA]</scope>
    <scope>LACK OF CATALYTIC ACTIVITY</scope>
    <scope>DEVELOPMENTAL STAGE</scope>
    <source>
        <tissue>Gastrula</tissue>
    </source>
</reference>
<reference key="2">
    <citation type="submission" date="2004-07" db="EMBL/GenBank/DDBJ databases">
        <authorList>
            <consortium name="NIH - Xenopus Gene Collection (XGC) project"/>
        </authorList>
    </citation>
    <scope>NUCLEOTIDE SEQUENCE [LARGE SCALE MRNA]</scope>
    <source>
        <tissue>Gastrula</tissue>
    </source>
</reference>
<evidence type="ECO:0000255" key="1"/>
<evidence type="ECO:0000269" key="2">
    <source>
    </source>
</evidence>
<evidence type="ECO:0000305" key="3"/>
<name>HASR_XENLA</name>
<organism>
    <name type="scientific">Xenopus laevis</name>
    <name type="common">African clawed frog</name>
    <dbReference type="NCBI Taxonomy" id="8355"/>
    <lineage>
        <taxon>Eukaryota</taxon>
        <taxon>Metazoa</taxon>
        <taxon>Chordata</taxon>
        <taxon>Craniata</taxon>
        <taxon>Vertebrata</taxon>
        <taxon>Euteleostomi</taxon>
        <taxon>Amphibia</taxon>
        <taxon>Batrachia</taxon>
        <taxon>Anura</taxon>
        <taxon>Pipoidea</taxon>
        <taxon>Pipidae</taxon>
        <taxon>Xenopodinae</taxon>
        <taxon>Xenopus</taxon>
        <taxon>Xenopus</taxon>
    </lineage>
</organism>
<feature type="chain" id="PRO_0000197182" description="Hyaluronan synthase-related protein">
    <location>
        <begin position="1"/>
        <end position="583"/>
    </location>
</feature>
<feature type="topological domain" description="Cytoplasmic" evidence="1">
    <location>
        <begin position="1"/>
        <end position="29"/>
    </location>
</feature>
<feature type="transmembrane region" description="Helical; Name=1" evidence="1">
    <location>
        <begin position="30"/>
        <end position="50"/>
    </location>
</feature>
<feature type="topological domain" description="Extracellular" evidence="1">
    <location>
        <begin position="51"/>
        <end position="52"/>
    </location>
</feature>
<feature type="transmembrane region" description="Helical; Name=2" evidence="1">
    <location>
        <begin position="53"/>
        <end position="73"/>
    </location>
</feature>
<feature type="topological domain" description="Cytoplasmic" evidence="1">
    <location>
        <begin position="74"/>
        <end position="393"/>
    </location>
</feature>
<feature type="transmembrane region" description="Helical; Name=3" evidence="1">
    <location>
        <begin position="394"/>
        <end position="414"/>
    </location>
</feature>
<feature type="topological domain" description="Extracellular" evidence="1">
    <location>
        <begin position="415"/>
        <end position="425"/>
    </location>
</feature>
<feature type="transmembrane region" description="Helical; Name=4" evidence="1">
    <location>
        <begin position="426"/>
        <end position="446"/>
    </location>
</feature>
<feature type="topological domain" description="Cytoplasmic" evidence="1">
    <location>
        <begin position="447"/>
        <end position="457"/>
    </location>
</feature>
<feature type="transmembrane region" description="Helical; Name=5" evidence="1">
    <location>
        <begin position="458"/>
        <end position="478"/>
    </location>
</feature>
<feature type="topological domain" description="Extracellular" evidence="1">
    <location>
        <begin position="479"/>
        <end position="497"/>
    </location>
</feature>
<feature type="transmembrane region" description="Helical; Name=6" evidence="1">
    <location>
        <begin position="498"/>
        <end position="518"/>
    </location>
</feature>
<feature type="topological domain" description="Cytoplasmic" evidence="1">
    <location>
        <begin position="519"/>
        <end position="535"/>
    </location>
</feature>
<feature type="transmembrane region" description="Helical; Name=7" evidence="1">
    <location>
        <begin position="536"/>
        <end position="556"/>
    </location>
</feature>
<feature type="topological domain" description="Extracellular" evidence="1">
    <location>
        <begin position="557"/>
        <end position="583"/>
    </location>
</feature>
<feature type="sequence conflict" description="In Ref. 1; AAC60343." evidence="3" ref="1">
    <original>H</original>
    <variation>R</variation>
    <location>
        <position position="270"/>
    </location>
</feature>
<feature type="sequence conflict" description="In Ref. 1; AAC60343." evidence="3" ref="1">
    <original>L</original>
    <variation>V</variation>
    <location>
        <position position="440"/>
    </location>
</feature>
<feature type="sequence conflict" description="In Ref. 1; AAC60343." evidence="3" ref="1">
    <original>I</original>
    <variation>V</variation>
    <location>
        <position position="518"/>
    </location>
</feature>
<keyword id="KW-0472">Membrane</keyword>
<keyword id="KW-1185">Reference proteome</keyword>
<keyword id="KW-0812">Transmembrane</keyword>
<keyword id="KW-1133">Transmembrane helix</keyword>
<sequence length="583" mass="67644">MENTTDPENIPVSKPKYPTIRRILSQTFRILLLFSITTAYVLGYQALCHQGLLITFGLYGAAMLLHLLMQGIFANLEIRRIEKRDGVCSFKKTVALTITGYQENPDYLRQCLESCKGMKYPKDKLKIILVIDGNNEEDVYMMEIFKEVFHGEDVGTYVWQENYHTWNIPSEESEDSSSEISSFPWKNEGIQMVEELVRTKRCVCIMQQWGGKREVMYTAFRALGTSVDFILVCNSDIKLDKMATVELVKVLEDDDKNGAVGGDVRVWNRHDSFISFMSSLRYWMVFNMEIACQSYFDSVTYIRGSLGMYRNDILQAFLEFWYNKTFLGTRCPIGDDRFLTNRVLSMGYRTKYSHKSCAYAPCQYLRWLNQQTPWARSYFRMWFCNAQWWHQHHIWMTYESATGIFFPFFVTAVLIRLMYSSSLCNIVWLFLCIQIMSLLLSLYASWQSKKLSMVLMSLYSTLYIIWLLPCQLVALLTIAKSDWGTSGRKKVVNNYVPLFSLSIWAAVLLGGLCYSMYIGCRKDWSKPQANRELYHLLYGCAGYMAYWVLMTVIYCVSGSCCKMRSQAVPQTHDITSLSVSLLV</sequence>
<proteinExistence type="evidence at protein level"/>